<keyword id="KW-0050">Antiport</keyword>
<keyword id="KW-0997">Cell inner membrane</keyword>
<keyword id="KW-1003">Cell membrane</keyword>
<keyword id="KW-0406">Ion transport</keyword>
<keyword id="KW-0472">Membrane</keyword>
<keyword id="KW-0915">Sodium</keyword>
<keyword id="KW-0739">Sodium transport</keyword>
<keyword id="KW-0812">Transmembrane</keyword>
<keyword id="KW-1133">Transmembrane helix</keyword>
<keyword id="KW-0813">Transport</keyword>
<proteinExistence type="inferred from homology"/>
<comment type="function">
    <text evidence="1">Multidrug efflux pump that functions probably as a Na(+)/drug antiporter.</text>
</comment>
<comment type="subcellular location">
    <subcellularLocation>
        <location evidence="1">Cell inner membrane</location>
        <topology evidence="1">Multi-pass membrane protein</topology>
    </subcellularLocation>
</comment>
<comment type="similarity">
    <text evidence="1">Belongs to the multi antimicrobial extrusion (MATE) (TC 2.A.66.1) family. MdtK subfamily.</text>
</comment>
<accession>B5RAN4</accession>
<evidence type="ECO:0000255" key="1">
    <source>
        <dbReference type="HAMAP-Rule" id="MF_00400"/>
    </source>
</evidence>
<reference key="1">
    <citation type="journal article" date="2008" name="Genome Res.">
        <title>Comparative genome analysis of Salmonella enteritidis PT4 and Salmonella gallinarum 287/91 provides insights into evolutionary and host adaptation pathways.</title>
        <authorList>
            <person name="Thomson N.R."/>
            <person name="Clayton D.J."/>
            <person name="Windhorst D."/>
            <person name="Vernikos G."/>
            <person name="Davidson S."/>
            <person name="Churcher C."/>
            <person name="Quail M.A."/>
            <person name="Stevens M."/>
            <person name="Jones M.A."/>
            <person name="Watson M."/>
            <person name="Barron A."/>
            <person name="Layton A."/>
            <person name="Pickard D."/>
            <person name="Kingsley R.A."/>
            <person name="Bignell A."/>
            <person name="Clark L."/>
            <person name="Harris B."/>
            <person name="Ormond D."/>
            <person name="Abdellah Z."/>
            <person name="Brooks K."/>
            <person name="Cherevach I."/>
            <person name="Chillingworth T."/>
            <person name="Woodward J."/>
            <person name="Norberczak H."/>
            <person name="Lord A."/>
            <person name="Arrowsmith C."/>
            <person name="Jagels K."/>
            <person name="Moule S."/>
            <person name="Mungall K."/>
            <person name="Saunders M."/>
            <person name="Whitehead S."/>
            <person name="Chabalgoity J.A."/>
            <person name="Maskell D."/>
            <person name="Humphreys T."/>
            <person name="Roberts M."/>
            <person name="Barrow P.A."/>
            <person name="Dougan G."/>
            <person name="Parkhill J."/>
        </authorList>
    </citation>
    <scope>NUCLEOTIDE SEQUENCE [LARGE SCALE GENOMIC DNA]</scope>
    <source>
        <strain>287/91 / NCTC 13346</strain>
    </source>
</reference>
<protein>
    <recommendedName>
        <fullName evidence="1">Multidrug resistance protein MdtK</fullName>
    </recommendedName>
    <alternativeName>
        <fullName evidence="1">Multidrug-efflux transporter</fullName>
    </alternativeName>
</protein>
<sequence length="457" mass="49440">MQKYTSEARQLLALAIPVILAQVAQTAMGFVDTVMAGGYSATDMAAVAIGTSIWLPAILFGHGLLLALTPVIAQLNGSGRRERIAHQVRQGFWLAGFVSVLVMIVLWNAGYIIRSMHNIDPALADKAVGYLRALLWGAPGYLFFQVARNQCEGLAKTKPGMVMGFLGLLVNIPVNYIFIYGHFGMPELGGIGCGVATAAVYWVMFIAMLSYIKHARSMRDIRNEKGFGKPDSIVMKRLIQLGLPIALALFFEVTLFAVVALLVSPLGIVDVAGHQIALNFSSLMFVLPMSLAAAVTIRVGYRLGQGSTLDAQTAARTGLGVGICMAVVTAIFTVTLRKHIALLYNDNPEVVALAAQLMLLAAVYQISDSIQVIGSGILRGYKDTRSIFFITFTAYWVLGLPSGYILALTDLVVDRMGPAGFWMGFIIGLTSAAVLMMLRMRYLQRQPSAIILQRAAR</sequence>
<organism>
    <name type="scientific">Salmonella gallinarum (strain 287/91 / NCTC 13346)</name>
    <dbReference type="NCBI Taxonomy" id="550538"/>
    <lineage>
        <taxon>Bacteria</taxon>
        <taxon>Pseudomonadati</taxon>
        <taxon>Pseudomonadota</taxon>
        <taxon>Gammaproteobacteria</taxon>
        <taxon>Enterobacterales</taxon>
        <taxon>Enterobacteriaceae</taxon>
        <taxon>Salmonella</taxon>
    </lineage>
</organism>
<dbReference type="EMBL" id="AM933173">
    <property type="protein sequence ID" value="CAR37552.1"/>
    <property type="molecule type" value="Genomic_DNA"/>
</dbReference>
<dbReference type="RefSeq" id="WP_001175071.1">
    <property type="nucleotide sequence ID" value="NC_011274.1"/>
</dbReference>
<dbReference type="SMR" id="B5RAN4"/>
<dbReference type="KEGG" id="seg:SG1693"/>
<dbReference type="HOGENOM" id="CLU_012893_6_0_6"/>
<dbReference type="Proteomes" id="UP000008321">
    <property type="component" value="Chromosome"/>
</dbReference>
<dbReference type="GO" id="GO:0005886">
    <property type="term" value="C:plasma membrane"/>
    <property type="evidence" value="ECO:0007669"/>
    <property type="project" value="UniProtKB-SubCell"/>
</dbReference>
<dbReference type="GO" id="GO:0015297">
    <property type="term" value="F:antiporter activity"/>
    <property type="evidence" value="ECO:0007669"/>
    <property type="project" value="UniProtKB-UniRule"/>
</dbReference>
<dbReference type="GO" id="GO:0042910">
    <property type="term" value="F:xenobiotic transmembrane transporter activity"/>
    <property type="evidence" value="ECO:0007669"/>
    <property type="project" value="UniProtKB-UniRule"/>
</dbReference>
<dbReference type="GO" id="GO:0006814">
    <property type="term" value="P:sodium ion transport"/>
    <property type="evidence" value="ECO:0007669"/>
    <property type="project" value="UniProtKB-UniRule"/>
</dbReference>
<dbReference type="GO" id="GO:0006855">
    <property type="term" value="P:xenobiotic transmembrane transport"/>
    <property type="evidence" value="ECO:0007669"/>
    <property type="project" value="UniProtKB-UniRule"/>
</dbReference>
<dbReference type="CDD" id="cd13131">
    <property type="entry name" value="MATE_NorM_like"/>
    <property type="match status" value="1"/>
</dbReference>
<dbReference type="HAMAP" id="MF_00400">
    <property type="entry name" value="MdtK"/>
    <property type="match status" value="1"/>
</dbReference>
<dbReference type="InterPro" id="IPR002528">
    <property type="entry name" value="MATE_fam"/>
</dbReference>
<dbReference type="InterPro" id="IPR050222">
    <property type="entry name" value="MATE_MdtK"/>
</dbReference>
<dbReference type="InterPro" id="IPR048279">
    <property type="entry name" value="MdtK-like"/>
</dbReference>
<dbReference type="InterPro" id="IPR022913">
    <property type="entry name" value="Multidrug-R_MdtK"/>
</dbReference>
<dbReference type="NCBIfam" id="TIGR00797">
    <property type="entry name" value="matE"/>
    <property type="match status" value="1"/>
</dbReference>
<dbReference type="PANTHER" id="PTHR43298:SF2">
    <property type="entry name" value="FMN_FAD EXPORTER YEEO-RELATED"/>
    <property type="match status" value="1"/>
</dbReference>
<dbReference type="PANTHER" id="PTHR43298">
    <property type="entry name" value="MULTIDRUG RESISTANCE PROTEIN NORM-RELATED"/>
    <property type="match status" value="1"/>
</dbReference>
<dbReference type="Pfam" id="PF01554">
    <property type="entry name" value="MatE"/>
    <property type="match status" value="2"/>
</dbReference>
<dbReference type="PIRSF" id="PIRSF006603">
    <property type="entry name" value="DinF"/>
    <property type="match status" value="1"/>
</dbReference>
<gene>
    <name evidence="1" type="primary">mdtK</name>
    <name type="ordered locus">SG1693</name>
</gene>
<name>MDTK_SALG2</name>
<feature type="chain" id="PRO_1000191103" description="Multidrug resistance protein MdtK">
    <location>
        <begin position="1"/>
        <end position="457"/>
    </location>
</feature>
<feature type="transmembrane region" description="Helical" evidence="1">
    <location>
        <begin position="11"/>
        <end position="31"/>
    </location>
</feature>
<feature type="transmembrane region" description="Helical" evidence="1">
    <location>
        <begin position="53"/>
        <end position="73"/>
    </location>
</feature>
<feature type="transmembrane region" description="Helical" evidence="1">
    <location>
        <begin position="93"/>
        <end position="113"/>
    </location>
</feature>
<feature type="transmembrane region" description="Helical" evidence="1">
    <location>
        <begin position="127"/>
        <end position="147"/>
    </location>
</feature>
<feature type="transmembrane region" description="Helical" evidence="1">
    <location>
        <begin position="160"/>
        <end position="180"/>
    </location>
</feature>
<feature type="transmembrane region" description="Helical" evidence="1">
    <location>
        <begin position="188"/>
        <end position="208"/>
    </location>
</feature>
<feature type="transmembrane region" description="Helical" evidence="1">
    <location>
        <begin position="243"/>
        <end position="263"/>
    </location>
</feature>
<feature type="transmembrane region" description="Helical" evidence="1">
    <location>
        <begin position="276"/>
        <end position="296"/>
    </location>
</feature>
<feature type="transmembrane region" description="Helical" evidence="1">
    <location>
        <begin position="314"/>
        <end position="334"/>
    </location>
</feature>
<feature type="transmembrane region" description="Helical" evidence="1">
    <location>
        <begin position="350"/>
        <end position="370"/>
    </location>
</feature>
<feature type="transmembrane region" description="Helical" evidence="1">
    <location>
        <begin position="387"/>
        <end position="407"/>
    </location>
</feature>
<feature type="transmembrane region" description="Helical" evidence="1">
    <location>
        <begin position="418"/>
        <end position="438"/>
    </location>
</feature>